<dbReference type="EMBL" id="CU458896">
    <property type="protein sequence ID" value="CAM63137.1"/>
    <property type="molecule type" value="Genomic_DNA"/>
</dbReference>
<dbReference type="RefSeq" id="WP_005116815.1">
    <property type="nucleotide sequence ID" value="NZ_MLCG01000003.1"/>
</dbReference>
<dbReference type="SMR" id="B1MD16"/>
<dbReference type="GeneID" id="93379992"/>
<dbReference type="KEGG" id="mab:MAB_3059c"/>
<dbReference type="Proteomes" id="UP000007137">
    <property type="component" value="Chromosome"/>
</dbReference>
<dbReference type="GO" id="GO:0005737">
    <property type="term" value="C:cytoplasm"/>
    <property type="evidence" value="ECO:0007669"/>
    <property type="project" value="UniProtKB-SubCell"/>
</dbReference>
<dbReference type="GO" id="GO:0006282">
    <property type="term" value="P:regulation of DNA repair"/>
    <property type="evidence" value="ECO:0007669"/>
    <property type="project" value="UniProtKB-UniRule"/>
</dbReference>
<dbReference type="Gene3D" id="1.10.10.10">
    <property type="entry name" value="Winged helix-like DNA-binding domain superfamily/Winged helix DNA-binding domain"/>
    <property type="match status" value="2"/>
</dbReference>
<dbReference type="HAMAP" id="MF_01114">
    <property type="entry name" value="RecX"/>
    <property type="match status" value="1"/>
</dbReference>
<dbReference type="InterPro" id="IPR053926">
    <property type="entry name" value="RecX_HTH_1st"/>
</dbReference>
<dbReference type="InterPro" id="IPR053924">
    <property type="entry name" value="RecX_HTH_2nd"/>
</dbReference>
<dbReference type="InterPro" id="IPR003783">
    <property type="entry name" value="Regulatory_RecX"/>
</dbReference>
<dbReference type="InterPro" id="IPR036388">
    <property type="entry name" value="WH-like_DNA-bd_sf"/>
</dbReference>
<dbReference type="NCBIfam" id="NF001056">
    <property type="entry name" value="PRK00117.3-1"/>
    <property type="match status" value="1"/>
</dbReference>
<dbReference type="PANTHER" id="PTHR33602">
    <property type="entry name" value="REGULATORY PROTEIN RECX FAMILY PROTEIN"/>
    <property type="match status" value="1"/>
</dbReference>
<dbReference type="PANTHER" id="PTHR33602:SF1">
    <property type="entry name" value="REGULATORY PROTEIN RECX FAMILY PROTEIN"/>
    <property type="match status" value="1"/>
</dbReference>
<dbReference type="Pfam" id="PF21982">
    <property type="entry name" value="RecX_HTH1"/>
    <property type="match status" value="1"/>
</dbReference>
<dbReference type="Pfam" id="PF02631">
    <property type="entry name" value="RecX_HTH2"/>
    <property type="match status" value="1"/>
</dbReference>
<accession>B1MD16</accession>
<keyword id="KW-0963">Cytoplasm</keyword>
<keyword id="KW-1185">Reference proteome</keyword>
<name>RECX_MYCA9</name>
<sequence length="204" mass="22281">MTKSSRPQSISDSVSVAGSQGTLDDLRARVASVPEAPTREPVDSRDEQAWSYCLRLLTSRARTRAELTERLARRGYPDDVSERIMDRLATAGLVNDADFATQWVQSRHTYSGKGKRALAAELRTKGVSAENAAAALAQIDGEAERSRAAELVTKKLRSENLDDGGIKAARRLVAMLARRGYGQSMAYDVVKNALASEKDRRDVG</sequence>
<gene>
    <name evidence="1" type="primary">recX</name>
    <name type="ordered locus">MAB_3059c</name>
</gene>
<evidence type="ECO:0000255" key="1">
    <source>
        <dbReference type="HAMAP-Rule" id="MF_01114"/>
    </source>
</evidence>
<evidence type="ECO:0000256" key="2">
    <source>
        <dbReference type="SAM" id="MobiDB-lite"/>
    </source>
</evidence>
<comment type="function">
    <text evidence="1">Modulates RecA activity.</text>
</comment>
<comment type="subcellular location">
    <subcellularLocation>
        <location evidence="1">Cytoplasm</location>
    </subcellularLocation>
</comment>
<comment type="similarity">
    <text evidence="1">Belongs to the RecX family.</text>
</comment>
<reference key="1">
    <citation type="journal article" date="2009" name="PLoS ONE">
        <title>Non mycobacterial virulence genes in the genome of the emerging pathogen Mycobacterium abscessus.</title>
        <authorList>
            <person name="Ripoll F."/>
            <person name="Pasek S."/>
            <person name="Schenowitz C."/>
            <person name="Dossat C."/>
            <person name="Barbe V."/>
            <person name="Rottman M."/>
            <person name="Macheras E."/>
            <person name="Heym B."/>
            <person name="Herrmann J.L."/>
            <person name="Daffe M."/>
            <person name="Brosch R."/>
            <person name="Risler J.L."/>
            <person name="Gaillard J.L."/>
        </authorList>
    </citation>
    <scope>NUCLEOTIDE SEQUENCE [LARGE SCALE GENOMIC DNA]</scope>
    <source>
        <strain>ATCC 19977 / DSM 44196 / CCUG 20993 / CIP 104536 / JCM 13569 / NCTC 13031 / TMC 1543 / L948</strain>
    </source>
</reference>
<proteinExistence type="inferred from homology"/>
<feature type="chain" id="PRO_1000164020" description="Regulatory protein RecX">
    <location>
        <begin position="1"/>
        <end position="204"/>
    </location>
</feature>
<feature type="region of interest" description="Disordered" evidence="2">
    <location>
        <begin position="1"/>
        <end position="44"/>
    </location>
</feature>
<feature type="compositionally biased region" description="Polar residues" evidence="2">
    <location>
        <begin position="1"/>
        <end position="22"/>
    </location>
</feature>
<protein>
    <recommendedName>
        <fullName evidence="1">Regulatory protein RecX</fullName>
    </recommendedName>
</protein>
<organism>
    <name type="scientific">Mycobacteroides abscessus (strain ATCC 19977 / DSM 44196 / CCUG 20993 / CIP 104536 / JCM 13569 / NCTC 13031 / TMC 1543 / L948)</name>
    <name type="common">Mycobacterium abscessus</name>
    <dbReference type="NCBI Taxonomy" id="561007"/>
    <lineage>
        <taxon>Bacteria</taxon>
        <taxon>Bacillati</taxon>
        <taxon>Actinomycetota</taxon>
        <taxon>Actinomycetes</taxon>
        <taxon>Mycobacteriales</taxon>
        <taxon>Mycobacteriaceae</taxon>
        <taxon>Mycobacteroides</taxon>
        <taxon>Mycobacteroides abscessus</taxon>
    </lineage>
</organism>